<comment type="function">
    <text evidence="1">Participates in a DNA-damage check-point. DisA forms globular foci that rapidly scan along the chromosomes searching for lesions.</text>
</comment>
<comment type="function">
    <text evidence="1">Also has diadenylate cyclase activity, catalyzing the condensation of 2 ATP molecules into cyclic di-AMP (c-di-AMP). c-di-AMP likely acts as a signaling molecule that may couple DNA integrity with a cellular process.</text>
</comment>
<comment type="catalytic activity">
    <reaction evidence="1">
        <text>2 ATP = 3',3'-c-di-AMP + 2 diphosphate</text>
        <dbReference type="Rhea" id="RHEA:35655"/>
        <dbReference type="ChEBI" id="CHEBI:30616"/>
        <dbReference type="ChEBI" id="CHEBI:33019"/>
        <dbReference type="ChEBI" id="CHEBI:71500"/>
        <dbReference type="EC" id="2.7.7.85"/>
    </reaction>
</comment>
<comment type="cofactor">
    <cofactor evidence="1">
        <name>Mg(2+)</name>
        <dbReference type="ChEBI" id="CHEBI:18420"/>
    </cofactor>
</comment>
<comment type="subunit">
    <text evidence="1">Homooctamer.</text>
</comment>
<comment type="similarity">
    <text evidence="1">Belongs to the DisA family.</text>
</comment>
<organism>
    <name type="scientific">Beutenbergia cavernae (strain ATCC BAA-8 / DSM 12333 / CCUG 43141 / JCM 11478 / NBRC 16432 / NCIMB 13614 / HKI 0122)</name>
    <dbReference type="NCBI Taxonomy" id="471853"/>
    <lineage>
        <taxon>Bacteria</taxon>
        <taxon>Bacillati</taxon>
        <taxon>Actinomycetota</taxon>
        <taxon>Actinomycetes</taxon>
        <taxon>Micrococcales</taxon>
        <taxon>Beutenbergiaceae</taxon>
        <taxon>Beutenbergia</taxon>
    </lineage>
</organism>
<sequence length="359" mass="38571">MSELVADPTGRAVLRAVAPGTELRDGLERILRGRTGALIVLGYDEVVEEMCSGGFVLDVAFSATRLRELAKMDGAIVLDRGATRVLRAAVQLLPDAAIETGESGTRHRTAERAAKQTGFPVISVSQSMRIVAIYSDGRRWVLEDSDAILSRANQALATLERYKSRLDEVSGTLSALEIEDLVTVRDVASVVQRLEMVRRISVEIAGYVDELGTDGRLLSLQLDELIGNVGPERELVVSDYVDARRAAALDDVLAGLARLDSTDLIDLVKIAQVRGLGGPGGDALDSAVGPRGHRMLSKIPRLPSPVIGAMVDHFGTLQKMLSASVEDLQLVDGVGALRARSVREGLSRLAESSLLERFV</sequence>
<proteinExistence type="inferred from homology"/>
<gene>
    <name evidence="1" type="primary">disA</name>
    <name type="ordered locus">Bcav_3280</name>
</gene>
<name>DISA_BEUC1</name>
<dbReference type="EC" id="2.7.7.85" evidence="1"/>
<dbReference type="EMBL" id="CP001618">
    <property type="protein sequence ID" value="ACQ81523.1"/>
    <property type="molecule type" value="Genomic_DNA"/>
</dbReference>
<dbReference type="RefSeq" id="WP_015883760.1">
    <property type="nucleotide sequence ID" value="NC_012669.1"/>
</dbReference>
<dbReference type="SMR" id="C5C1B3"/>
<dbReference type="STRING" id="471853.Bcav_3280"/>
<dbReference type="KEGG" id="bcv:Bcav_3280"/>
<dbReference type="eggNOG" id="COG1623">
    <property type="taxonomic scope" value="Bacteria"/>
</dbReference>
<dbReference type="HOGENOM" id="CLU_787128_0_0_11"/>
<dbReference type="OrthoDB" id="41841at2"/>
<dbReference type="Proteomes" id="UP000007962">
    <property type="component" value="Chromosome"/>
</dbReference>
<dbReference type="GO" id="GO:0004016">
    <property type="term" value="F:adenylate cyclase activity"/>
    <property type="evidence" value="ECO:0007669"/>
    <property type="project" value="TreeGrafter"/>
</dbReference>
<dbReference type="GO" id="GO:0005524">
    <property type="term" value="F:ATP binding"/>
    <property type="evidence" value="ECO:0007669"/>
    <property type="project" value="UniProtKB-UniRule"/>
</dbReference>
<dbReference type="GO" id="GO:0106408">
    <property type="term" value="F:diadenylate cyclase activity"/>
    <property type="evidence" value="ECO:0007669"/>
    <property type="project" value="UniProtKB-EC"/>
</dbReference>
<dbReference type="GO" id="GO:0003677">
    <property type="term" value="F:DNA binding"/>
    <property type="evidence" value="ECO:0007669"/>
    <property type="project" value="UniProtKB-UniRule"/>
</dbReference>
<dbReference type="GO" id="GO:0006281">
    <property type="term" value="P:DNA repair"/>
    <property type="evidence" value="ECO:0007669"/>
    <property type="project" value="UniProtKB-UniRule"/>
</dbReference>
<dbReference type="FunFam" id="3.40.1700.10:FF:000001">
    <property type="entry name" value="DNA integrity scanning protein DisA"/>
    <property type="match status" value="1"/>
</dbReference>
<dbReference type="Gene3D" id="1.10.150.20">
    <property type="entry name" value="5' to 3' exonuclease, C-terminal subdomain"/>
    <property type="match status" value="1"/>
</dbReference>
<dbReference type="Gene3D" id="1.20.1260.110">
    <property type="entry name" value="DNA integrity scanning linker region"/>
    <property type="match status" value="1"/>
</dbReference>
<dbReference type="Gene3D" id="3.40.1700.10">
    <property type="entry name" value="DNA integrity scanning protein, DisA, N-terminal domain"/>
    <property type="match status" value="1"/>
</dbReference>
<dbReference type="HAMAP" id="MF_01438">
    <property type="entry name" value="DisA"/>
    <property type="match status" value="1"/>
</dbReference>
<dbReference type="InterPro" id="IPR050338">
    <property type="entry name" value="DisA"/>
</dbReference>
<dbReference type="InterPro" id="IPR038331">
    <property type="entry name" value="DisA_sf"/>
</dbReference>
<dbReference type="InterPro" id="IPR036888">
    <property type="entry name" value="DNA_integrity_DisA_N_sf"/>
</dbReference>
<dbReference type="InterPro" id="IPR018906">
    <property type="entry name" value="DNA_integrity_scan_DisA_link"/>
</dbReference>
<dbReference type="InterPro" id="IPR003390">
    <property type="entry name" value="DNA_integrity_scan_DisA_N"/>
</dbReference>
<dbReference type="InterPro" id="IPR023763">
    <property type="entry name" value="DNA_integrity_scanning_protein"/>
</dbReference>
<dbReference type="InterPro" id="IPR010994">
    <property type="entry name" value="RuvA_2-like"/>
</dbReference>
<dbReference type="NCBIfam" id="NF010009">
    <property type="entry name" value="PRK13482.1"/>
    <property type="match status" value="1"/>
</dbReference>
<dbReference type="PANTHER" id="PTHR34185">
    <property type="entry name" value="DIADENYLATE CYCLASE"/>
    <property type="match status" value="1"/>
</dbReference>
<dbReference type="PANTHER" id="PTHR34185:SF3">
    <property type="entry name" value="DNA INTEGRITY SCANNING PROTEIN DISA"/>
    <property type="match status" value="1"/>
</dbReference>
<dbReference type="Pfam" id="PF02457">
    <property type="entry name" value="DAC"/>
    <property type="match status" value="1"/>
</dbReference>
<dbReference type="Pfam" id="PF10635">
    <property type="entry name" value="DisA-linker"/>
    <property type="match status" value="1"/>
</dbReference>
<dbReference type="SUPFAM" id="SSF47781">
    <property type="entry name" value="RuvA domain 2-like"/>
    <property type="match status" value="1"/>
</dbReference>
<dbReference type="SUPFAM" id="SSF143597">
    <property type="entry name" value="YojJ-like"/>
    <property type="match status" value="1"/>
</dbReference>
<dbReference type="PROSITE" id="PS51794">
    <property type="entry name" value="DAC"/>
    <property type="match status" value="1"/>
</dbReference>
<evidence type="ECO:0000255" key="1">
    <source>
        <dbReference type="HAMAP-Rule" id="MF_01438"/>
    </source>
</evidence>
<evidence type="ECO:0000255" key="2">
    <source>
        <dbReference type="PROSITE-ProRule" id="PRU01130"/>
    </source>
</evidence>
<keyword id="KW-0067">ATP-binding</keyword>
<keyword id="KW-0227">DNA damage</keyword>
<keyword id="KW-0234">DNA repair</keyword>
<keyword id="KW-0238">DNA-binding</keyword>
<keyword id="KW-0460">Magnesium</keyword>
<keyword id="KW-0547">Nucleotide-binding</keyword>
<keyword id="KW-0548">Nucleotidyltransferase</keyword>
<keyword id="KW-1185">Reference proteome</keyword>
<keyword id="KW-0808">Transferase</keyword>
<accession>C5C1B3</accession>
<reference key="1">
    <citation type="journal article" date="2009" name="Stand. Genomic Sci.">
        <title>Complete genome sequence of Beutenbergia cavernae type strain (HKI 0122).</title>
        <authorList>
            <person name="Land M."/>
            <person name="Pukall R."/>
            <person name="Abt B."/>
            <person name="Goker M."/>
            <person name="Rohde M."/>
            <person name="Glavina Del Rio T."/>
            <person name="Tice H."/>
            <person name="Copeland A."/>
            <person name="Cheng J.F."/>
            <person name="Lucas S."/>
            <person name="Chen F."/>
            <person name="Nolan M."/>
            <person name="Bruce D."/>
            <person name="Goodwin L."/>
            <person name="Pitluck S."/>
            <person name="Ivanova N."/>
            <person name="Mavromatis K."/>
            <person name="Ovchinnikova G."/>
            <person name="Pati A."/>
            <person name="Chen A."/>
            <person name="Palaniappan K."/>
            <person name="Hauser L."/>
            <person name="Chang Y.J."/>
            <person name="Jefferies C.C."/>
            <person name="Saunders E."/>
            <person name="Brettin T."/>
            <person name="Detter J.C."/>
            <person name="Han C."/>
            <person name="Chain P."/>
            <person name="Bristow J."/>
            <person name="Eisen J.A."/>
            <person name="Markowitz V."/>
            <person name="Hugenholtz P."/>
            <person name="Kyrpides N.C."/>
            <person name="Klenk H.P."/>
            <person name="Lapidus A."/>
        </authorList>
    </citation>
    <scope>NUCLEOTIDE SEQUENCE [LARGE SCALE GENOMIC DNA]</scope>
    <source>
        <strain>ATCC BAA-8 / DSM 12333 / CCUG 43141 / JCM 11478 / NBRC 16432 / NCIMB 13614 / HKI 0122</strain>
    </source>
</reference>
<feature type="chain" id="PRO_1000215280" description="DNA integrity scanning protein DisA">
    <location>
        <begin position="1"/>
        <end position="359"/>
    </location>
</feature>
<feature type="domain" description="DAC" evidence="2">
    <location>
        <begin position="7"/>
        <end position="145"/>
    </location>
</feature>
<feature type="binding site" evidence="1">
    <location>
        <position position="74"/>
    </location>
    <ligand>
        <name>ATP</name>
        <dbReference type="ChEBI" id="CHEBI:30616"/>
    </ligand>
</feature>
<feature type="binding site" evidence="1">
    <location>
        <position position="92"/>
    </location>
    <ligand>
        <name>ATP</name>
        <dbReference type="ChEBI" id="CHEBI:30616"/>
    </ligand>
</feature>
<feature type="binding site" evidence="1">
    <location>
        <begin position="105"/>
        <end position="109"/>
    </location>
    <ligand>
        <name>ATP</name>
        <dbReference type="ChEBI" id="CHEBI:30616"/>
    </ligand>
</feature>
<protein>
    <recommendedName>
        <fullName evidence="1">DNA integrity scanning protein DisA</fullName>
    </recommendedName>
    <alternativeName>
        <fullName evidence="1">Cyclic di-AMP synthase</fullName>
        <shortName evidence="1">c-di-AMP synthase</shortName>
    </alternativeName>
    <alternativeName>
        <fullName evidence="1">Diadenylate cyclase</fullName>
        <ecNumber evidence="1">2.7.7.85</ecNumber>
    </alternativeName>
</protein>